<organism>
    <name type="scientific">Treponema pallidum subsp. pallidum (strain SS14)</name>
    <dbReference type="NCBI Taxonomy" id="455434"/>
    <lineage>
        <taxon>Bacteria</taxon>
        <taxon>Pseudomonadati</taxon>
        <taxon>Spirochaetota</taxon>
        <taxon>Spirochaetia</taxon>
        <taxon>Spirochaetales</taxon>
        <taxon>Treponemataceae</taxon>
        <taxon>Treponema</taxon>
    </lineage>
</organism>
<dbReference type="EC" id="6.1.1.14" evidence="1"/>
<dbReference type="EMBL" id="CP000805">
    <property type="protein sequence ID" value="ACD71090.1"/>
    <property type="molecule type" value="Genomic_DNA"/>
</dbReference>
<dbReference type="SMR" id="B2S3R1"/>
<dbReference type="KEGG" id="tpp:TPASS_0672"/>
<dbReference type="PATRIC" id="fig|455434.6.peg.665"/>
<dbReference type="Proteomes" id="UP000001202">
    <property type="component" value="Chromosome"/>
</dbReference>
<dbReference type="GO" id="GO:0005737">
    <property type="term" value="C:cytoplasm"/>
    <property type="evidence" value="ECO:0007669"/>
    <property type="project" value="UniProtKB-SubCell"/>
</dbReference>
<dbReference type="GO" id="GO:0005524">
    <property type="term" value="F:ATP binding"/>
    <property type="evidence" value="ECO:0007669"/>
    <property type="project" value="UniProtKB-UniRule"/>
</dbReference>
<dbReference type="GO" id="GO:0004820">
    <property type="term" value="F:glycine-tRNA ligase activity"/>
    <property type="evidence" value="ECO:0000250"/>
    <property type="project" value="UniProtKB"/>
</dbReference>
<dbReference type="GO" id="GO:0046983">
    <property type="term" value="F:protein dimerization activity"/>
    <property type="evidence" value="ECO:0000250"/>
    <property type="project" value="UniProtKB"/>
</dbReference>
<dbReference type="GO" id="GO:0006426">
    <property type="term" value="P:glycyl-tRNA aminoacylation"/>
    <property type="evidence" value="ECO:0007669"/>
    <property type="project" value="UniProtKB-UniRule"/>
</dbReference>
<dbReference type="CDD" id="cd00774">
    <property type="entry name" value="GlyRS-like_core"/>
    <property type="match status" value="1"/>
</dbReference>
<dbReference type="CDD" id="cd00858">
    <property type="entry name" value="GlyRS_anticodon"/>
    <property type="match status" value="1"/>
</dbReference>
<dbReference type="FunFam" id="3.30.930.10:FF:000014">
    <property type="entry name" value="Glycine--tRNA ligase"/>
    <property type="match status" value="1"/>
</dbReference>
<dbReference type="FunFam" id="3.40.50.800:FF:000002">
    <property type="entry name" value="Glycine--tRNA ligase"/>
    <property type="match status" value="1"/>
</dbReference>
<dbReference type="Gene3D" id="3.40.50.800">
    <property type="entry name" value="Anticodon-binding domain"/>
    <property type="match status" value="1"/>
</dbReference>
<dbReference type="Gene3D" id="3.30.930.10">
    <property type="entry name" value="Bira Bifunctional Protein, Domain 2"/>
    <property type="match status" value="1"/>
</dbReference>
<dbReference type="HAMAP" id="MF_00253_B">
    <property type="entry name" value="Gly_tRNA_synth_B"/>
    <property type="match status" value="1"/>
</dbReference>
<dbReference type="InterPro" id="IPR002314">
    <property type="entry name" value="aa-tRNA-synt_IIb"/>
</dbReference>
<dbReference type="InterPro" id="IPR006195">
    <property type="entry name" value="aa-tRNA-synth_II"/>
</dbReference>
<dbReference type="InterPro" id="IPR045864">
    <property type="entry name" value="aa-tRNA-synth_II/BPL/LPL"/>
</dbReference>
<dbReference type="InterPro" id="IPR004154">
    <property type="entry name" value="Anticodon-bd"/>
</dbReference>
<dbReference type="InterPro" id="IPR036621">
    <property type="entry name" value="Anticodon-bd_dom_sf"/>
</dbReference>
<dbReference type="InterPro" id="IPR027031">
    <property type="entry name" value="Gly-tRNA_synthase/POLG2"/>
</dbReference>
<dbReference type="InterPro" id="IPR022961">
    <property type="entry name" value="Gly_tRNA_ligase_bac"/>
</dbReference>
<dbReference type="InterPro" id="IPR033731">
    <property type="entry name" value="GlyRS-like_core"/>
</dbReference>
<dbReference type="InterPro" id="IPR002315">
    <property type="entry name" value="tRNA-synt_gly"/>
</dbReference>
<dbReference type="NCBIfam" id="TIGR00389">
    <property type="entry name" value="glyS_dimeric"/>
    <property type="match status" value="1"/>
</dbReference>
<dbReference type="NCBIfam" id="NF003211">
    <property type="entry name" value="PRK04173.1"/>
    <property type="match status" value="1"/>
</dbReference>
<dbReference type="PANTHER" id="PTHR10745:SF8">
    <property type="entry name" value="DNA POLYMERASE SUBUNIT GAMMA-2, MITOCHONDRIAL"/>
    <property type="match status" value="1"/>
</dbReference>
<dbReference type="PANTHER" id="PTHR10745">
    <property type="entry name" value="GLYCYL-TRNA SYNTHETASE/DNA POLYMERASE SUBUNIT GAMMA-2"/>
    <property type="match status" value="1"/>
</dbReference>
<dbReference type="Pfam" id="PF03129">
    <property type="entry name" value="HGTP_anticodon"/>
    <property type="match status" value="1"/>
</dbReference>
<dbReference type="Pfam" id="PF00587">
    <property type="entry name" value="tRNA-synt_2b"/>
    <property type="match status" value="1"/>
</dbReference>
<dbReference type="PRINTS" id="PR01043">
    <property type="entry name" value="TRNASYNTHGLY"/>
</dbReference>
<dbReference type="SUPFAM" id="SSF52954">
    <property type="entry name" value="Class II aaRS ABD-related"/>
    <property type="match status" value="1"/>
</dbReference>
<dbReference type="SUPFAM" id="SSF55681">
    <property type="entry name" value="Class II aaRS and biotin synthetases"/>
    <property type="match status" value="1"/>
</dbReference>
<dbReference type="PROSITE" id="PS50862">
    <property type="entry name" value="AA_TRNA_LIGASE_II"/>
    <property type="match status" value="1"/>
</dbReference>
<keyword id="KW-0030">Aminoacyl-tRNA synthetase</keyword>
<keyword id="KW-0067">ATP-binding</keyword>
<keyword id="KW-0963">Cytoplasm</keyword>
<keyword id="KW-0436">Ligase</keyword>
<keyword id="KW-0547">Nucleotide-binding</keyword>
<keyword id="KW-0648">Protein biosynthesis</keyword>
<protein>
    <recommendedName>
        <fullName evidence="1">Glycine--tRNA ligase</fullName>
        <ecNumber evidence="1">6.1.1.14</ecNumber>
    </recommendedName>
    <alternativeName>
        <fullName evidence="1">Glycyl-tRNA synthetase</fullName>
        <shortName evidence="1">GlyRS</shortName>
    </alternativeName>
</protein>
<comment type="function">
    <text evidence="1">Catalyzes the attachment of glycine to tRNA(Gly).</text>
</comment>
<comment type="catalytic activity">
    <reaction evidence="1">
        <text>tRNA(Gly) + glycine + ATP = glycyl-tRNA(Gly) + AMP + diphosphate</text>
        <dbReference type="Rhea" id="RHEA:16013"/>
        <dbReference type="Rhea" id="RHEA-COMP:9664"/>
        <dbReference type="Rhea" id="RHEA-COMP:9683"/>
        <dbReference type="ChEBI" id="CHEBI:30616"/>
        <dbReference type="ChEBI" id="CHEBI:33019"/>
        <dbReference type="ChEBI" id="CHEBI:57305"/>
        <dbReference type="ChEBI" id="CHEBI:78442"/>
        <dbReference type="ChEBI" id="CHEBI:78522"/>
        <dbReference type="ChEBI" id="CHEBI:456215"/>
        <dbReference type="EC" id="6.1.1.14"/>
    </reaction>
</comment>
<comment type="subunit">
    <text evidence="1">Homodimer.</text>
</comment>
<comment type="subcellular location">
    <subcellularLocation>
        <location evidence="1">Cytoplasm</location>
    </subcellularLocation>
</comment>
<comment type="similarity">
    <text evidence="1">Belongs to the class-II aminoacyl-tRNA synthetase family.</text>
</comment>
<reference key="1">
    <citation type="journal article" date="2008" name="BMC Microbiol.">
        <title>Complete genome sequence of Treponema pallidum ssp. pallidum strain SS14 determined with oligonucleotide arrays.</title>
        <authorList>
            <person name="Matejkova P."/>
            <person name="Strouhal M."/>
            <person name="Smajs D."/>
            <person name="Norris S.J."/>
            <person name="Palzkill T."/>
            <person name="Petrosino J.F."/>
            <person name="Sodergren E."/>
            <person name="Norton J.E."/>
            <person name="Singh J."/>
            <person name="Richmond T.A."/>
            <person name="Molla M.N."/>
            <person name="Albert T.J."/>
            <person name="Weinstock G.M."/>
        </authorList>
    </citation>
    <scope>NUCLEOTIDE SEQUENCE [LARGE SCALE GENOMIC DNA]</scope>
    <source>
        <strain>SS14</strain>
    </source>
</reference>
<name>SYG_TREPS</name>
<gene>
    <name evidence="1" type="primary">glyQS</name>
    <name type="ordered locus">TPASS_0672</name>
</gene>
<feature type="chain" id="PRO_1000101169" description="Glycine--tRNA ligase">
    <location>
        <begin position="1"/>
        <end position="462"/>
    </location>
</feature>
<feature type="binding site" evidence="1">
    <location>
        <position position="94"/>
    </location>
    <ligand>
        <name>substrate</name>
    </ligand>
</feature>
<feature type="binding site" evidence="1">
    <location>
        <position position="143"/>
    </location>
    <ligand>
        <name>substrate</name>
    </ligand>
</feature>
<feature type="binding site" evidence="1">
    <location>
        <begin position="175"/>
        <end position="177"/>
    </location>
    <ligand>
        <name>ATP</name>
        <dbReference type="ChEBI" id="CHEBI:30616"/>
    </ligand>
</feature>
<feature type="binding site" evidence="1">
    <location>
        <begin position="185"/>
        <end position="190"/>
    </location>
    <ligand>
        <name>ATP</name>
        <dbReference type="ChEBI" id="CHEBI:30616"/>
    </ligand>
</feature>
<feature type="binding site" evidence="1">
    <location>
        <begin position="190"/>
        <end position="194"/>
    </location>
    <ligand>
        <name>substrate</name>
    </ligand>
</feature>
<feature type="binding site" evidence="1">
    <location>
        <begin position="259"/>
        <end position="260"/>
    </location>
    <ligand>
        <name>ATP</name>
        <dbReference type="ChEBI" id="CHEBI:30616"/>
    </ligand>
</feature>
<feature type="binding site" evidence="1">
    <location>
        <begin position="304"/>
        <end position="308"/>
    </location>
    <ligand>
        <name>substrate</name>
    </ligand>
</feature>
<feature type="binding site" evidence="1">
    <location>
        <begin position="308"/>
        <end position="311"/>
    </location>
    <ligand>
        <name>ATP</name>
        <dbReference type="ChEBI" id="CHEBI:30616"/>
    </ligand>
</feature>
<sequence>MEKIVGLCKRRGFVFPSSEIYGGQGGVWDYGPMGIALKNNIAHAWWQDMTRLHDHIVGLDAAILMHPNVWRTSGHVDHFSDPLVDCTVCKSRFRADQVAVPSAGGPCPQCGGALTGVRNFNLMFSTHMGPTDERASLLYLRPETAQGIYVNYKNVLQTTRLKVPFGIAQIGKAFRNEIVTKNFIFRTCEFEQMEMQFFVRPAEDTHWFEYWCAQRWAFYQKYGVRMNHMRWRTHAAHELAHYARAACDIEYAFPMGFRELEGVHNRGDFDLTRHAQHSGKDLCYVDPDPNLDAAARRYVPCVVETSAGLTRCVLMFLCDAYTEEYVQAPNVAFSETTQTADQEGAARTGEMRIVLRLHPALSPTTVAFLPLVKKDGLVDLARAVRDELREDFACDFDAAGAIGKRYRRQDEVGTPFCVTVDYQSKEDDTVTVRLRDSMAQRRVSRAFLAEFLRTEIKHYRRP</sequence>
<proteinExistence type="inferred from homology"/>
<evidence type="ECO:0000255" key="1">
    <source>
        <dbReference type="HAMAP-Rule" id="MF_00253"/>
    </source>
</evidence>
<accession>B2S3R1</accession>